<accession>P33319</accession>
<organism>
    <name type="scientific">Proteus hauseri</name>
    <dbReference type="NCBI Taxonomy" id="183417"/>
    <lineage>
        <taxon>Bacteria</taxon>
        <taxon>Pseudomonadati</taxon>
        <taxon>Pseudomonadota</taxon>
        <taxon>Gammaproteobacteria</taxon>
        <taxon>Enterobacterales</taxon>
        <taxon>Morganellaceae</taxon>
        <taxon>Proteus</taxon>
    </lineage>
</organism>
<sequence>MKGGKRIQSTRQNRINSEIRAHEVRLTGLDGEQIGVVSLKEALEKAEEAGADLVEISPNAEPPVCRIMDYGKFLYEKSKTLKEQKKEQKVIQVKEVKFRPGTDEGDYQVKLRNLIRFLEDGDKAKVTLRFRGREMAHQQIGMEVLNRIRQDLDELATVESFPNKIEGRQMIMVLAPKKK</sequence>
<gene>
    <name evidence="2" type="primary">infC</name>
</gene>
<comment type="function">
    <text evidence="2">IF-3 binds to the 30S ribosomal subunit and shifts the equilibrium between 70S ribosomes and their 50S and 30S subunits in favor of the free subunits, thus enhancing the availability of 30S subunits on which protein synthesis initiation begins.</text>
</comment>
<comment type="subunit">
    <text evidence="2">Monomer.</text>
</comment>
<comment type="subcellular location">
    <subcellularLocation>
        <location evidence="2">Cytoplasm</location>
    </subcellularLocation>
</comment>
<comment type="similarity">
    <text evidence="2">Belongs to the IF-3 family.</text>
</comment>
<keyword id="KW-0963">Cytoplasm</keyword>
<keyword id="KW-0396">Initiation factor</keyword>
<keyword id="KW-0648">Protein biosynthesis</keyword>
<name>IF3_PROHU</name>
<feature type="chain" id="PRO_0000177556" description="Translation initiation factor IF-3">
    <location>
        <begin position="1"/>
        <end position="179"/>
    </location>
</feature>
<feature type="site" description="Important for 30S binding" evidence="1">
    <location>
        <position position="107"/>
    </location>
</feature>
<feature type="site" description="Important for 30S binding" evidence="1">
    <location>
        <position position="110"/>
    </location>
</feature>
<protein>
    <recommendedName>
        <fullName evidence="2">Translation initiation factor IF-3</fullName>
    </recommendedName>
</protein>
<dbReference type="EMBL" id="L11257">
    <property type="protein sequence ID" value="AAC36812.1"/>
    <property type="molecule type" value="Unassigned_DNA"/>
</dbReference>
<dbReference type="SMR" id="P33319"/>
<dbReference type="STRING" id="1354271.M997_1724"/>
<dbReference type="GO" id="GO:0005829">
    <property type="term" value="C:cytosol"/>
    <property type="evidence" value="ECO:0007669"/>
    <property type="project" value="TreeGrafter"/>
</dbReference>
<dbReference type="GO" id="GO:0016020">
    <property type="term" value="C:membrane"/>
    <property type="evidence" value="ECO:0007669"/>
    <property type="project" value="TreeGrafter"/>
</dbReference>
<dbReference type="GO" id="GO:0043022">
    <property type="term" value="F:ribosome binding"/>
    <property type="evidence" value="ECO:0007669"/>
    <property type="project" value="TreeGrafter"/>
</dbReference>
<dbReference type="GO" id="GO:0003743">
    <property type="term" value="F:translation initiation factor activity"/>
    <property type="evidence" value="ECO:0007669"/>
    <property type="project" value="UniProtKB-UniRule"/>
</dbReference>
<dbReference type="GO" id="GO:0032790">
    <property type="term" value="P:ribosome disassembly"/>
    <property type="evidence" value="ECO:0007669"/>
    <property type="project" value="TreeGrafter"/>
</dbReference>
<dbReference type="FunFam" id="3.10.20.80:FF:000001">
    <property type="entry name" value="Translation initiation factor IF-3"/>
    <property type="match status" value="1"/>
</dbReference>
<dbReference type="FunFam" id="3.30.110.10:FF:000001">
    <property type="entry name" value="Translation initiation factor IF-3"/>
    <property type="match status" value="1"/>
</dbReference>
<dbReference type="Gene3D" id="3.30.110.10">
    <property type="entry name" value="Translation initiation factor 3 (IF-3), C-terminal domain"/>
    <property type="match status" value="1"/>
</dbReference>
<dbReference type="Gene3D" id="3.10.20.80">
    <property type="entry name" value="Translation initiation factor 3 (IF-3), N-terminal domain"/>
    <property type="match status" value="1"/>
</dbReference>
<dbReference type="HAMAP" id="MF_00080">
    <property type="entry name" value="IF_3"/>
    <property type="match status" value="1"/>
</dbReference>
<dbReference type="InterPro" id="IPR036788">
    <property type="entry name" value="T_IF-3_C_sf"/>
</dbReference>
<dbReference type="InterPro" id="IPR036787">
    <property type="entry name" value="T_IF-3_N_sf"/>
</dbReference>
<dbReference type="InterPro" id="IPR019813">
    <property type="entry name" value="Translation_initiation_fac3_CS"/>
</dbReference>
<dbReference type="InterPro" id="IPR001288">
    <property type="entry name" value="Translation_initiation_fac_3"/>
</dbReference>
<dbReference type="InterPro" id="IPR019815">
    <property type="entry name" value="Translation_initiation_fac_3_C"/>
</dbReference>
<dbReference type="InterPro" id="IPR019814">
    <property type="entry name" value="Translation_initiation_fac_3_N"/>
</dbReference>
<dbReference type="NCBIfam" id="TIGR00168">
    <property type="entry name" value="infC"/>
    <property type="match status" value="1"/>
</dbReference>
<dbReference type="PANTHER" id="PTHR10938">
    <property type="entry name" value="TRANSLATION INITIATION FACTOR IF-3"/>
    <property type="match status" value="1"/>
</dbReference>
<dbReference type="PANTHER" id="PTHR10938:SF0">
    <property type="entry name" value="TRANSLATION INITIATION FACTOR IF-3, MITOCHONDRIAL"/>
    <property type="match status" value="1"/>
</dbReference>
<dbReference type="Pfam" id="PF00707">
    <property type="entry name" value="IF3_C"/>
    <property type="match status" value="1"/>
</dbReference>
<dbReference type="Pfam" id="PF05198">
    <property type="entry name" value="IF3_N"/>
    <property type="match status" value="1"/>
</dbReference>
<dbReference type="SUPFAM" id="SSF55200">
    <property type="entry name" value="Translation initiation factor IF3, C-terminal domain"/>
    <property type="match status" value="1"/>
</dbReference>
<dbReference type="SUPFAM" id="SSF54364">
    <property type="entry name" value="Translation initiation factor IF3, N-terminal domain"/>
    <property type="match status" value="1"/>
</dbReference>
<dbReference type="PROSITE" id="PS00938">
    <property type="entry name" value="IF3"/>
    <property type="match status" value="1"/>
</dbReference>
<proteinExistence type="inferred from homology"/>
<reference key="1">
    <citation type="journal article" date="1993" name="FEMS Microbiol. Lett.">
        <title>Molecular cloning and sequencing of infC, the gene encoding translation initiation factor IF3, from four enterobacterial species.</title>
        <authorList>
            <person name="Liveris D."/>
            <person name="Schwartz J.J."/>
            <person name="Geertman R."/>
            <person name="Schwartz I."/>
        </authorList>
    </citation>
    <scope>NUCLEOTIDE SEQUENCE [GENOMIC DNA]</scope>
    <source>
        <strain>ATCC 13315 / DSM 30118 / JCM 1668 / NBRC 3851 / NCIMB 4175 / NCTC 4175 / NRRL B-3405</strain>
    </source>
</reference>
<evidence type="ECO:0000250" key="1"/>
<evidence type="ECO:0000255" key="2">
    <source>
        <dbReference type="HAMAP-Rule" id="MF_00080"/>
    </source>
</evidence>